<name>Y401_METJA</name>
<accession>Q57844</accession>
<keyword id="KW-1185">Reference proteome</keyword>
<organism>
    <name type="scientific">Methanocaldococcus jannaschii (strain ATCC 43067 / DSM 2661 / JAL-1 / JCM 10045 / NBRC 100440)</name>
    <name type="common">Methanococcus jannaschii</name>
    <dbReference type="NCBI Taxonomy" id="243232"/>
    <lineage>
        <taxon>Archaea</taxon>
        <taxon>Methanobacteriati</taxon>
        <taxon>Methanobacteriota</taxon>
        <taxon>Methanomada group</taxon>
        <taxon>Methanococci</taxon>
        <taxon>Methanococcales</taxon>
        <taxon>Methanocaldococcaceae</taxon>
        <taxon>Methanocaldococcus</taxon>
    </lineage>
</organism>
<sequence>MEMKRFLCAKCQKVIEVPYGVPKPDVCPYCGAPATFIHRIDAGGRGLGPGRGRRCGMRMMGRFRRE</sequence>
<protein>
    <recommendedName>
        <fullName>Uncharacterized protein MJ0401</fullName>
    </recommendedName>
</protein>
<gene>
    <name type="ordered locus">MJ0401</name>
</gene>
<proteinExistence type="predicted"/>
<feature type="chain" id="PRO_0000106853" description="Uncharacterized protein MJ0401">
    <location>
        <begin position="1"/>
        <end position="66"/>
    </location>
</feature>
<dbReference type="EMBL" id="L77117">
    <property type="protein sequence ID" value="AAB98394.1"/>
    <property type="molecule type" value="Genomic_DNA"/>
</dbReference>
<dbReference type="PIR" id="A64350">
    <property type="entry name" value="A64350"/>
</dbReference>
<dbReference type="RefSeq" id="WP_010869900.1">
    <property type="nucleotide sequence ID" value="NC_000909.1"/>
</dbReference>
<dbReference type="SMR" id="Q57844"/>
<dbReference type="STRING" id="243232.MJ_0401"/>
<dbReference type="PaxDb" id="243232-MJ_0401"/>
<dbReference type="EnsemblBacteria" id="AAB98394">
    <property type="protein sequence ID" value="AAB98394"/>
    <property type="gene ID" value="MJ_0401"/>
</dbReference>
<dbReference type="GeneID" id="1451261"/>
<dbReference type="KEGG" id="mja:MJ_0401"/>
<dbReference type="eggNOG" id="arCOG06573">
    <property type="taxonomic scope" value="Archaea"/>
</dbReference>
<dbReference type="HOGENOM" id="CLU_2820824_0_0_2"/>
<dbReference type="InParanoid" id="Q57844"/>
<dbReference type="OrthoDB" id="129238at2157"/>
<dbReference type="Proteomes" id="UP000000805">
    <property type="component" value="Chromosome"/>
</dbReference>
<dbReference type="SUPFAM" id="SSF57802">
    <property type="entry name" value="Rubredoxin-like"/>
    <property type="match status" value="1"/>
</dbReference>
<reference key="1">
    <citation type="journal article" date="1996" name="Science">
        <title>Complete genome sequence of the methanogenic archaeon, Methanococcus jannaschii.</title>
        <authorList>
            <person name="Bult C.J."/>
            <person name="White O."/>
            <person name="Olsen G.J."/>
            <person name="Zhou L."/>
            <person name="Fleischmann R.D."/>
            <person name="Sutton G.G."/>
            <person name="Blake J.A."/>
            <person name="FitzGerald L.M."/>
            <person name="Clayton R.A."/>
            <person name="Gocayne J.D."/>
            <person name="Kerlavage A.R."/>
            <person name="Dougherty B.A."/>
            <person name="Tomb J.-F."/>
            <person name="Adams M.D."/>
            <person name="Reich C.I."/>
            <person name="Overbeek R."/>
            <person name="Kirkness E.F."/>
            <person name="Weinstock K.G."/>
            <person name="Merrick J.M."/>
            <person name="Glodek A."/>
            <person name="Scott J.L."/>
            <person name="Geoghagen N.S.M."/>
            <person name="Weidman J.F."/>
            <person name="Fuhrmann J.L."/>
            <person name="Nguyen D."/>
            <person name="Utterback T.R."/>
            <person name="Kelley J.M."/>
            <person name="Peterson J.D."/>
            <person name="Sadow P.W."/>
            <person name="Hanna M.C."/>
            <person name="Cotton M.D."/>
            <person name="Roberts K.M."/>
            <person name="Hurst M.A."/>
            <person name="Kaine B.P."/>
            <person name="Borodovsky M."/>
            <person name="Klenk H.-P."/>
            <person name="Fraser C.M."/>
            <person name="Smith H.O."/>
            <person name="Woese C.R."/>
            <person name="Venter J.C."/>
        </authorList>
    </citation>
    <scope>NUCLEOTIDE SEQUENCE [LARGE SCALE GENOMIC DNA]</scope>
    <source>
        <strain>ATCC 43067 / DSM 2661 / JAL-1 / JCM 10045 / NBRC 100440</strain>
    </source>
</reference>